<protein>
    <recommendedName>
        <fullName evidence="1">Aspartate--tRNA ligase</fullName>
        <ecNumber evidence="1">6.1.1.12</ecNumber>
    </recommendedName>
    <alternativeName>
        <fullName evidence="1">Aspartyl-tRNA synthetase</fullName>
        <shortName evidence="1">AspRS</shortName>
    </alternativeName>
</protein>
<gene>
    <name evidence="1" type="primary">aspS</name>
    <name type="ordered locus">STM1901</name>
</gene>
<sequence length="590" mass="65666">MRTEYCGQLRLSHVGQQVTLCGWVNRRRDLGSLIFIDMRDREGIVQVFFDPDRADALKLASELRNEFCIQVTGTVRARDAKNVNADMATGEIEVLASSLTIINRADSLPLDANHVNTEEARLKYRYLDLRRPEMAQRLKTRAKITSLVRRFMDDHGFLDIETPMLTKATPEGARDYLVPSRVHKGKFYALPQSPQLFKQLLMMSGFDRYYQIVKCFRDEDLRADRQPEFTQIDVETSFMTAPQVREVMEALVRHLWLEVKGVDLGDFPVMTFAEAERRYGSDKPDLRNPMELVDVADLLKSVEFAVFAGPANDPKGRVAALRVPGGAQLSRKQIDDYGNFVKIYGAKGLAYIKVNERAKGLDGINSPVAKFLTADIVEAILERTGAQDGDMIFFGADNNKVVADALGALRLKLGKDLSLTDEDKWAPLWVIDFPMFEDDGEGGLTAMHHPFTAPRDMTASELKTAPEGAVANAYDMVINGYEVGGGSVRIHNGEMQQTVFGILGINEQEQREKFGFLLDALKYGTPPHAGLAFGLDRLTMLLTGTDNIRDVIAFPKTTAAACLMTEAPSFANLAALTELGIQVVKKAENN</sequence>
<comment type="function">
    <text evidence="1">Catalyzes the attachment of L-aspartate to tRNA(Asp) in a two-step reaction: L-aspartate is first activated by ATP to form Asp-AMP and then transferred to the acceptor end of tRNA(Asp).</text>
</comment>
<comment type="catalytic activity">
    <reaction evidence="1">
        <text>tRNA(Asp) + L-aspartate + ATP = L-aspartyl-tRNA(Asp) + AMP + diphosphate</text>
        <dbReference type="Rhea" id="RHEA:19649"/>
        <dbReference type="Rhea" id="RHEA-COMP:9660"/>
        <dbReference type="Rhea" id="RHEA-COMP:9678"/>
        <dbReference type="ChEBI" id="CHEBI:29991"/>
        <dbReference type="ChEBI" id="CHEBI:30616"/>
        <dbReference type="ChEBI" id="CHEBI:33019"/>
        <dbReference type="ChEBI" id="CHEBI:78442"/>
        <dbReference type="ChEBI" id="CHEBI:78516"/>
        <dbReference type="ChEBI" id="CHEBI:456215"/>
        <dbReference type="EC" id="6.1.1.12"/>
    </reaction>
</comment>
<comment type="subunit">
    <text evidence="1">Homodimer.</text>
</comment>
<comment type="subcellular location">
    <subcellularLocation>
        <location evidence="1">Cytoplasm</location>
    </subcellularLocation>
</comment>
<comment type="similarity">
    <text evidence="1">Belongs to the class-II aminoacyl-tRNA synthetase family. Type 1 subfamily.</text>
</comment>
<reference key="1">
    <citation type="journal article" date="2001" name="Nature">
        <title>Complete genome sequence of Salmonella enterica serovar Typhimurium LT2.</title>
        <authorList>
            <person name="McClelland M."/>
            <person name="Sanderson K.E."/>
            <person name="Spieth J."/>
            <person name="Clifton S.W."/>
            <person name="Latreille P."/>
            <person name="Courtney L."/>
            <person name="Porwollik S."/>
            <person name="Ali J."/>
            <person name="Dante M."/>
            <person name="Du F."/>
            <person name="Hou S."/>
            <person name="Layman D."/>
            <person name="Leonard S."/>
            <person name="Nguyen C."/>
            <person name="Scott K."/>
            <person name="Holmes A."/>
            <person name="Grewal N."/>
            <person name="Mulvaney E."/>
            <person name="Ryan E."/>
            <person name="Sun H."/>
            <person name="Florea L."/>
            <person name="Miller W."/>
            <person name="Stoneking T."/>
            <person name="Nhan M."/>
            <person name="Waterston R."/>
            <person name="Wilson R.K."/>
        </authorList>
    </citation>
    <scope>NUCLEOTIDE SEQUENCE [LARGE SCALE GENOMIC DNA]</scope>
    <source>
        <strain>LT2 / SGSC1412 / ATCC 700720</strain>
    </source>
</reference>
<keyword id="KW-0030">Aminoacyl-tRNA synthetase</keyword>
<keyword id="KW-0067">ATP-binding</keyword>
<keyword id="KW-0963">Cytoplasm</keyword>
<keyword id="KW-0436">Ligase</keyword>
<keyword id="KW-0547">Nucleotide-binding</keyword>
<keyword id="KW-0648">Protein biosynthesis</keyword>
<keyword id="KW-1185">Reference proteome</keyword>
<name>SYD_SALTY</name>
<dbReference type="EC" id="6.1.1.12" evidence="1"/>
<dbReference type="EMBL" id="AE006468">
    <property type="protein sequence ID" value="AAL20817.1"/>
    <property type="molecule type" value="Genomic_DNA"/>
</dbReference>
<dbReference type="RefSeq" id="NP_460858.1">
    <property type="nucleotide sequence ID" value="NC_003197.2"/>
</dbReference>
<dbReference type="RefSeq" id="WP_001258636.1">
    <property type="nucleotide sequence ID" value="NC_003197.2"/>
</dbReference>
<dbReference type="SMR" id="Q8ZNV2"/>
<dbReference type="STRING" id="99287.STM1901"/>
<dbReference type="PaxDb" id="99287-STM1901"/>
<dbReference type="GeneID" id="1253422"/>
<dbReference type="KEGG" id="stm:STM1901"/>
<dbReference type="PATRIC" id="fig|99287.12.peg.2016"/>
<dbReference type="HOGENOM" id="CLU_014330_3_2_6"/>
<dbReference type="OMA" id="LCGWVDR"/>
<dbReference type="PhylomeDB" id="Q8ZNV2"/>
<dbReference type="BioCyc" id="SENT99287:STM1901-MONOMER"/>
<dbReference type="Proteomes" id="UP000001014">
    <property type="component" value="Chromosome"/>
</dbReference>
<dbReference type="GO" id="GO:0005737">
    <property type="term" value="C:cytoplasm"/>
    <property type="evidence" value="ECO:0007669"/>
    <property type="project" value="UniProtKB-SubCell"/>
</dbReference>
<dbReference type="GO" id="GO:0004815">
    <property type="term" value="F:aspartate-tRNA ligase activity"/>
    <property type="evidence" value="ECO:0000318"/>
    <property type="project" value="GO_Central"/>
</dbReference>
<dbReference type="GO" id="GO:0005524">
    <property type="term" value="F:ATP binding"/>
    <property type="evidence" value="ECO:0007669"/>
    <property type="project" value="UniProtKB-UniRule"/>
</dbReference>
<dbReference type="GO" id="GO:0003676">
    <property type="term" value="F:nucleic acid binding"/>
    <property type="evidence" value="ECO:0007669"/>
    <property type="project" value="InterPro"/>
</dbReference>
<dbReference type="GO" id="GO:0006422">
    <property type="term" value="P:aspartyl-tRNA aminoacylation"/>
    <property type="evidence" value="ECO:0000318"/>
    <property type="project" value="GO_Central"/>
</dbReference>
<dbReference type="CDD" id="cd00777">
    <property type="entry name" value="AspRS_core"/>
    <property type="match status" value="1"/>
</dbReference>
<dbReference type="CDD" id="cd04317">
    <property type="entry name" value="EcAspRS_like_N"/>
    <property type="match status" value="1"/>
</dbReference>
<dbReference type="FunFam" id="2.40.50.140:FF:000080">
    <property type="entry name" value="Aspartate--tRNA ligase"/>
    <property type="match status" value="1"/>
</dbReference>
<dbReference type="FunFam" id="3.30.1360.30:FF:000001">
    <property type="entry name" value="Aspartate--tRNA ligase"/>
    <property type="match status" value="1"/>
</dbReference>
<dbReference type="Gene3D" id="3.30.930.10">
    <property type="entry name" value="Bira Bifunctional Protein, Domain 2"/>
    <property type="match status" value="1"/>
</dbReference>
<dbReference type="Gene3D" id="3.30.1360.30">
    <property type="entry name" value="GAD-like domain"/>
    <property type="match status" value="1"/>
</dbReference>
<dbReference type="Gene3D" id="2.40.50.140">
    <property type="entry name" value="Nucleic acid-binding proteins"/>
    <property type="match status" value="1"/>
</dbReference>
<dbReference type="HAMAP" id="MF_00044">
    <property type="entry name" value="Asp_tRNA_synth_type1"/>
    <property type="match status" value="1"/>
</dbReference>
<dbReference type="InterPro" id="IPR004364">
    <property type="entry name" value="Aa-tRNA-synt_II"/>
</dbReference>
<dbReference type="InterPro" id="IPR006195">
    <property type="entry name" value="aa-tRNA-synth_II"/>
</dbReference>
<dbReference type="InterPro" id="IPR045864">
    <property type="entry name" value="aa-tRNA-synth_II/BPL/LPL"/>
</dbReference>
<dbReference type="InterPro" id="IPR004524">
    <property type="entry name" value="Asp-tRNA-ligase_1"/>
</dbReference>
<dbReference type="InterPro" id="IPR047089">
    <property type="entry name" value="Asp-tRNA-ligase_1_N"/>
</dbReference>
<dbReference type="InterPro" id="IPR002312">
    <property type="entry name" value="Asp/Asn-tRNA-synth_IIb"/>
</dbReference>
<dbReference type="InterPro" id="IPR047090">
    <property type="entry name" value="AspRS_core"/>
</dbReference>
<dbReference type="InterPro" id="IPR004115">
    <property type="entry name" value="GAD-like_sf"/>
</dbReference>
<dbReference type="InterPro" id="IPR029351">
    <property type="entry name" value="GAD_dom"/>
</dbReference>
<dbReference type="InterPro" id="IPR012340">
    <property type="entry name" value="NA-bd_OB-fold"/>
</dbReference>
<dbReference type="InterPro" id="IPR004365">
    <property type="entry name" value="NA-bd_OB_tRNA"/>
</dbReference>
<dbReference type="NCBIfam" id="TIGR00459">
    <property type="entry name" value="aspS_bact"/>
    <property type="match status" value="1"/>
</dbReference>
<dbReference type="NCBIfam" id="NF001750">
    <property type="entry name" value="PRK00476.1"/>
    <property type="match status" value="1"/>
</dbReference>
<dbReference type="PANTHER" id="PTHR22594:SF5">
    <property type="entry name" value="ASPARTATE--TRNA LIGASE, MITOCHONDRIAL"/>
    <property type="match status" value="1"/>
</dbReference>
<dbReference type="PANTHER" id="PTHR22594">
    <property type="entry name" value="ASPARTYL/LYSYL-TRNA SYNTHETASE"/>
    <property type="match status" value="1"/>
</dbReference>
<dbReference type="Pfam" id="PF02938">
    <property type="entry name" value="GAD"/>
    <property type="match status" value="1"/>
</dbReference>
<dbReference type="Pfam" id="PF00152">
    <property type="entry name" value="tRNA-synt_2"/>
    <property type="match status" value="1"/>
</dbReference>
<dbReference type="Pfam" id="PF01336">
    <property type="entry name" value="tRNA_anti-codon"/>
    <property type="match status" value="1"/>
</dbReference>
<dbReference type="PRINTS" id="PR01042">
    <property type="entry name" value="TRNASYNTHASP"/>
</dbReference>
<dbReference type="SUPFAM" id="SSF55681">
    <property type="entry name" value="Class II aaRS and biotin synthetases"/>
    <property type="match status" value="1"/>
</dbReference>
<dbReference type="SUPFAM" id="SSF55261">
    <property type="entry name" value="GAD domain-like"/>
    <property type="match status" value="1"/>
</dbReference>
<dbReference type="SUPFAM" id="SSF50249">
    <property type="entry name" value="Nucleic acid-binding proteins"/>
    <property type="match status" value="1"/>
</dbReference>
<dbReference type="PROSITE" id="PS50862">
    <property type="entry name" value="AA_TRNA_LIGASE_II"/>
    <property type="match status" value="1"/>
</dbReference>
<evidence type="ECO:0000255" key="1">
    <source>
        <dbReference type="HAMAP-Rule" id="MF_00044"/>
    </source>
</evidence>
<proteinExistence type="inferred from homology"/>
<feature type="chain" id="PRO_0000110937" description="Aspartate--tRNA ligase">
    <location>
        <begin position="1"/>
        <end position="590"/>
    </location>
</feature>
<feature type="region of interest" description="Aspartate" evidence="1">
    <location>
        <begin position="195"/>
        <end position="198"/>
    </location>
</feature>
<feature type="binding site" evidence="1">
    <location>
        <position position="171"/>
    </location>
    <ligand>
        <name>L-aspartate</name>
        <dbReference type="ChEBI" id="CHEBI:29991"/>
    </ligand>
</feature>
<feature type="binding site" evidence="1">
    <location>
        <begin position="217"/>
        <end position="219"/>
    </location>
    <ligand>
        <name>ATP</name>
        <dbReference type="ChEBI" id="CHEBI:30616"/>
    </ligand>
</feature>
<feature type="binding site" evidence="1">
    <location>
        <position position="217"/>
    </location>
    <ligand>
        <name>L-aspartate</name>
        <dbReference type="ChEBI" id="CHEBI:29991"/>
    </ligand>
</feature>
<feature type="binding site" evidence="1">
    <location>
        <position position="226"/>
    </location>
    <ligand>
        <name>ATP</name>
        <dbReference type="ChEBI" id="CHEBI:30616"/>
    </ligand>
</feature>
<feature type="binding site" evidence="1">
    <location>
        <position position="448"/>
    </location>
    <ligand>
        <name>L-aspartate</name>
        <dbReference type="ChEBI" id="CHEBI:29991"/>
    </ligand>
</feature>
<feature type="binding site" evidence="1">
    <location>
        <position position="482"/>
    </location>
    <ligand>
        <name>ATP</name>
        <dbReference type="ChEBI" id="CHEBI:30616"/>
    </ligand>
</feature>
<feature type="binding site" evidence="1">
    <location>
        <position position="489"/>
    </location>
    <ligand>
        <name>L-aspartate</name>
        <dbReference type="ChEBI" id="CHEBI:29991"/>
    </ligand>
</feature>
<feature type="binding site" evidence="1">
    <location>
        <begin position="534"/>
        <end position="537"/>
    </location>
    <ligand>
        <name>ATP</name>
        <dbReference type="ChEBI" id="CHEBI:30616"/>
    </ligand>
</feature>
<organism>
    <name type="scientific">Salmonella typhimurium (strain LT2 / SGSC1412 / ATCC 700720)</name>
    <dbReference type="NCBI Taxonomy" id="99287"/>
    <lineage>
        <taxon>Bacteria</taxon>
        <taxon>Pseudomonadati</taxon>
        <taxon>Pseudomonadota</taxon>
        <taxon>Gammaproteobacteria</taxon>
        <taxon>Enterobacterales</taxon>
        <taxon>Enterobacteriaceae</taxon>
        <taxon>Salmonella</taxon>
    </lineage>
</organism>
<accession>Q8ZNV2</accession>